<organism>
    <name type="scientific">Azorhizobium caulinodans (strain ATCC 43989 / DSM 5975 / JCM 20966 / LMG 6465 / NBRC 14845 / NCIMB 13405 / ORS 571)</name>
    <dbReference type="NCBI Taxonomy" id="438753"/>
    <lineage>
        <taxon>Bacteria</taxon>
        <taxon>Pseudomonadati</taxon>
        <taxon>Pseudomonadota</taxon>
        <taxon>Alphaproteobacteria</taxon>
        <taxon>Hyphomicrobiales</taxon>
        <taxon>Xanthobacteraceae</taxon>
        <taxon>Azorhizobium</taxon>
    </lineage>
</organism>
<reference key="1">
    <citation type="submission" date="2007-04" db="EMBL/GenBank/DDBJ databases">
        <title>Complete genome sequence of the nitrogen-fixing bacterium Azorhizobium caulinodans ORS571.</title>
        <authorList>
            <person name="Lee K.B."/>
            <person name="Backer P.D."/>
            <person name="Aono T."/>
            <person name="Liu C.T."/>
            <person name="Suzuki S."/>
            <person name="Suzuki T."/>
            <person name="Kaneko T."/>
            <person name="Yamada M."/>
            <person name="Tabata S."/>
            <person name="Kupfer D.M."/>
            <person name="Najar F.Z."/>
            <person name="Wiley G.B."/>
            <person name="Roe B."/>
            <person name="Binnewies T."/>
            <person name="Ussery D."/>
            <person name="Vereecke D."/>
            <person name="Gevers D."/>
            <person name="Holsters M."/>
            <person name="Oyaizu H."/>
        </authorList>
    </citation>
    <scope>NUCLEOTIDE SEQUENCE [LARGE SCALE GENOMIC DNA]</scope>
    <source>
        <strain>ATCC 43989 / DSM 5975 / JCM 20966 / LMG 6465 / NBRC 14845 / NCIMB 13405 / ORS 571</strain>
    </source>
</reference>
<sequence>MSDILSRIETYKRAEIEAARAARPQAETEAAARAADPVRPFAKALEAKIAAGQTALIAEIKKASPSKGLIRPDFDPPVLARAYEDGGAACLSILTDGPSFQGAPEYLIAARAQVSLPVLRKDFLFDTYQVAEARAWGADCILVIMAAVDDALARDLVEAATDFGMDSIIEVHDEAELDRALALPSKLIGINNRNLRTFETTLATSGRLAPRVPKDRIVIGESGIFTHADVKLLRQVGIASILVGESLMRQEDVTSATRTLLNG</sequence>
<proteinExistence type="inferred from homology"/>
<comment type="catalytic activity">
    <reaction evidence="1">
        <text>1-(2-carboxyphenylamino)-1-deoxy-D-ribulose 5-phosphate + H(+) = (1S,2R)-1-C-(indol-3-yl)glycerol 3-phosphate + CO2 + H2O</text>
        <dbReference type="Rhea" id="RHEA:23476"/>
        <dbReference type="ChEBI" id="CHEBI:15377"/>
        <dbReference type="ChEBI" id="CHEBI:15378"/>
        <dbReference type="ChEBI" id="CHEBI:16526"/>
        <dbReference type="ChEBI" id="CHEBI:58613"/>
        <dbReference type="ChEBI" id="CHEBI:58866"/>
        <dbReference type="EC" id="4.1.1.48"/>
    </reaction>
</comment>
<comment type="pathway">
    <text evidence="1">Amino-acid biosynthesis; L-tryptophan biosynthesis; L-tryptophan from chorismate: step 4/5.</text>
</comment>
<comment type="similarity">
    <text evidence="1">Belongs to the TrpC family.</text>
</comment>
<evidence type="ECO:0000255" key="1">
    <source>
        <dbReference type="HAMAP-Rule" id="MF_00134"/>
    </source>
</evidence>
<name>TRPC_AZOC5</name>
<feature type="chain" id="PRO_1000071431" description="Indole-3-glycerol phosphate synthase">
    <location>
        <begin position="1"/>
        <end position="263"/>
    </location>
</feature>
<accession>A8I836</accession>
<dbReference type="EC" id="4.1.1.48" evidence="1"/>
<dbReference type="EMBL" id="AP009384">
    <property type="protein sequence ID" value="BAF88203.1"/>
    <property type="molecule type" value="Genomic_DNA"/>
</dbReference>
<dbReference type="RefSeq" id="WP_012170732.1">
    <property type="nucleotide sequence ID" value="NC_009937.1"/>
</dbReference>
<dbReference type="SMR" id="A8I836"/>
<dbReference type="STRING" id="438753.AZC_2205"/>
<dbReference type="KEGG" id="azc:AZC_2205"/>
<dbReference type="eggNOG" id="COG0134">
    <property type="taxonomic scope" value="Bacteria"/>
</dbReference>
<dbReference type="HOGENOM" id="CLU_034247_2_0_5"/>
<dbReference type="UniPathway" id="UPA00035">
    <property type="reaction ID" value="UER00043"/>
</dbReference>
<dbReference type="Proteomes" id="UP000000270">
    <property type="component" value="Chromosome"/>
</dbReference>
<dbReference type="GO" id="GO:0004425">
    <property type="term" value="F:indole-3-glycerol-phosphate synthase activity"/>
    <property type="evidence" value="ECO:0007669"/>
    <property type="project" value="UniProtKB-UniRule"/>
</dbReference>
<dbReference type="GO" id="GO:0004640">
    <property type="term" value="F:phosphoribosylanthranilate isomerase activity"/>
    <property type="evidence" value="ECO:0007669"/>
    <property type="project" value="TreeGrafter"/>
</dbReference>
<dbReference type="GO" id="GO:0000162">
    <property type="term" value="P:L-tryptophan biosynthetic process"/>
    <property type="evidence" value="ECO:0007669"/>
    <property type="project" value="UniProtKB-UniRule"/>
</dbReference>
<dbReference type="CDD" id="cd00331">
    <property type="entry name" value="IGPS"/>
    <property type="match status" value="1"/>
</dbReference>
<dbReference type="FunFam" id="3.20.20.70:FF:000024">
    <property type="entry name" value="Indole-3-glycerol phosphate synthase"/>
    <property type="match status" value="1"/>
</dbReference>
<dbReference type="Gene3D" id="3.20.20.70">
    <property type="entry name" value="Aldolase class I"/>
    <property type="match status" value="1"/>
</dbReference>
<dbReference type="HAMAP" id="MF_00134_B">
    <property type="entry name" value="IGPS_B"/>
    <property type="match status" value="1"/>
</dbReference>
<dbReference type="InterPro" id="IPR013785">
    <property type="entry name" value="Aldolase_TIM"/>
</dbReference>
<dbReference type="InterPro" id="IPR045186">
    <property type="entry name" value="Indole-3-glycerol_P_synth"/>
</dbReference>
<dbReference type="InterPro" id="IPR013798">
    <property type="entry name" value="Indole-3-glycerol_P_synth_dom"/>
</dbReference>
<dbReference type="InterPro" id="IPR001468">
    <property type="entry name" value="Indole-3-GlycerolPSynthase_CS"/>
</dbReference>
<dbReference type="InterPro" id="IPR011060">
    <property type="entry name" value="RibuloseP-bd_barrel"/>
</dbReference>
<dbReference type="NCBIfam" id="NF001370">
    <property type="entry name" value="PRK00278.1-2"/>
    <property type="match status" value="1"/>
</dbReference>
<dbReference type="NCBIfam" id="NF001373">
    <property type="entry name" value="PRK00278.1-6"/>
    <property type="match status" value="1"/>
</dbReference>
<dbReference type="NCBIfam" id="NF001377">
    <property type="entry name" value="PRK00278.2-4"/>
    <property type="match status" value="1"/>
</dbReference>
<dbReference type="PANTHER" id="PTHR22854:SF2">
    <property type="entry name" value="INDOLE-3-GLYCEROL-PHOSPHATE SYNTHASE"/>
    <property type="match status" value="1"/>
</dbReference>
<dbReference type="PANTHER" id="PTHR22854">
    <property type="entry name" value="TRYPTOPHAN BIOSYNTHESIS PROTEIN"/>
    <property type="match status" value="1"/>
</dbReference>
<dbReference type="Pfam" id="PF00218">
    <property type="entry name" value="IGPS"/>
    <property type="match status" value="1"/>
</dbReference>
<dbReference type="SUPFAM" id="SSF51366">
    <property type="entry name" value="Ribulose-phoshate binding barrel"/>
    <property type="match status" value="1"/>
</dbReference>
<dbReference type="PROSITE" id="PS00614">
    <property type="entry name" value="IGPS"/>
    <property type="match status" value="1"/>
</dbReference>
<keyword id="KW-0028">Amino-acid biosynthesis</keyword>
<keyword id="KW-0057">Aromatic amino acid biosynthesis</keyword>
<keyword id="KW-0210">Decarboxylase</keyword>
<keyword id="KW-0456">Lyase</keyword>
<keyword id="KW-1185">Reference proteome</keyword>
<keyword id="KW-0822">Tryptophan biosynthesis</keyword>
<protein>
    <recommendedName>
        <fullName evidence="1">Indole-3-glycerol phosphate synthase</fullName>
        <shortName evidence="1">IGPS</shortName>
        <ecNumber evidence="1">4.1.1.48</ecNumber>
    </recommendedName>
</protein>
<gene>
    <name evidence="1" type="primary">trpC</name>
    <name type="ordered locus">AZC_2205</name>
</gene>